<organism>
    <name type="scientific">Brassica campestris</name>
    <name type="common">Field mustard</name>
    <dbReference type="NCBI Taxonomy" id="3711"/>
    <lineage>
        <taxon>Eukaryota</taxon>
        <taxon>Viridiplantae</taxon>
        <taxon>Streptophyta</taxon>
        <taxon>Embryophyta</taxon>
        <taxon>Tracheophyta</taxon>
        <taxon>Spermatophyta</taxon>
        <taxon>Magnoliopsida</taxon>
        <taxon>eudicotyledons</taxon>
        <taxon>Gunneridae</taxon>
        <taxon>Pentapetalae</taxon>
        <taxon>rosids</taxon>
        <taxon>malvids</taxon>
        <taxon>Brassicales</taxon>
        <taxon>Brassicaceae</taxon>
        <taxon>Brassiceae</taxon>
        <taxon>Brassica</taxon>
    </lineage>
</organism>
<dbReference type="EMBL" id="D63153">
    <property type="protein sequence ID" value="BAA09634.1"/>
    <property type="molecule type" value="mRNA"/>
</dbReference>
<dbReference type="EMBL" id="AB032260">
    <property type="protein sequence ID" value="BAA93509.1"/>
    <property type="molecule type" value="Genomic_DNA"/>
</dbReference>
<dbReference type="PIR" id="S65151">
    <property type="entry name" value="S65151"/>
</dbReference>
<dbReference type="RefSeq" id="XP_009126190.1">
    <property type="nucleotide sequence ID" value="XM_009127942.3"/>
</dbReference>
<dbReference type="SMR" id="P69197"/>
<dbReference type="Allergome" id="10125">
    <property type="allergen name" value="Bra r 5.0101"/>
</dbReference>
<dbReference type="Allergome" id="171">
    <property type="allergen name" value="Bra r 5"/>
</dbReference>
<dbReference type="EnsemblPlants" id="A02p07600.2_BraZ1">
    <property type="protein sequence ID" value="A02p07600.2_BraZ1.CDS.1"/>
    <property type="gene ID" value="A02g07600.2_BraZ1"/>
</dbReference>
<dbReference type="EnsemblPlants" id="Bra023621.1">
    <property type="protein sequence ID" value="Bra023621.1-P"/>
    <property type="gene ID" value="Bra023621"/>
</dbReference>
<dbReference type="GeneID" id="103851111"/>
<dbReference type="Gramene" id="A02p07600.2_BraZ1">
    <property type="protein sequence ID" value="A02p07600.2_BraZ1.CDS.1"/>
    <property type="gene ID" value="A02g07600.2_BraZ1"/>
</dbReference>
<dbReference type="Gramene" id="Bra023621.1">
    <property type="protein sequence ID" value="Bra023621.1-P"/>
    <property type="gene ID" value="Bra023621"/>
</dbReference>
<dbReference type="KEGG" id="brp:103851111"/>
<dbReference type="OMA" id="INFARAN"/>
<dbReference type="OrthoDB" id="26525at2759"/>
<dbReference type="Proteomes" id="UP000011750">
    <property type="component" value="Chromosome A02"/>
</dbReference>
<dbReference type="GO" id="GO:0005509">
    <property type="term" value="F:calcium ion binding"/>
    <property type="evidence" value="ECO:0000318"/>
    <property type="project" value="GO_Central"/>
</dbReference>
<dbReference type="CDD" id="cd00051">
    <property type="entry name" value="EFh"/>
    <property type="match status" value="1"/>
</dbReference>
<dbReference type="FunFam" id="1.10.238.10:FF:000003">
    <property type="entry name" value="Calmodulin A"/>
    <property type="match status" value="1"/>
</dbReference>
<dbReference type="Gene3D" id="1.10.238.10">
    <property type="entry name" value="EF-hand"/>
    <property type="match status" value="1"/>
</dbReference>
<dbReference type="InterPro" id="IPR011992">
    <property type="entry name" value="EF-hand-dom_pair"/>
</dbReference>
<dbReference type="InterPro" id="IPR018247">
    <property type="entry name" value="EF_Hand_1_Ca_BS"/>
</dbReference>
<dbReference type="InterPro" id="IPR002048">
    <property type="entry name" value="EF_hand_dom"/>
</dbReference>
<dbReference type="InterPro" id="IPR039647">
    <property type="entry name" value="EF_hand_pair_protein_CML-like"/>
</dbReference>
<dbReference type="PANTHER" id="PTHR10891">
    <property type="entry name" value="EF-HAND CALCIUM-BINDING DOMAIN CONTAINING PROTEIN"/>
    <property type="match status" value="1"/>
</dbReference>
<dbReference type="Pfam" id="PF13499">
    <property type="entry name" value="EF-hand_7"/>
    <property type="match status" value="1"/>
</dbReference>
<dbReference type="SMART" id="SM00054">
    <property type="entry name" value="EFh"/>
    <property type="match status" value="2"/>
</dbReference>
<dbReference type="SUPFAM" id="SSF47473">
    <property type="entry name" value="EF-hand"/>
    <property type="match status" value="1"/>
</dbReference>
<dbReference type="PROSITE" id="PS00018">
    <property type="entry name" value="EF_HAND_1"/>
    <property type="match status" value="2"/>
</dbReference>
<dbReference type="PROSITE" id="PS50222">
    <property type="entry name" value="EF_HAND_2"/>
    <property type="match status" value="2"/>
</dbReference>
<feature type="chain" id="PRO_0000073668" description="Polcalcin Bra r 1">
    <location>
        <begin position="1"/>
        <end position="79"/>
    </location>
</feature>
<feature type="domain" description="EF-hand 1" evidence="1">
    <location>
        <begin position="1"/>
        <end position="36"/>
    </location>
</feature>
<feature type="domain" description="EF-hand 2" evidence="1">
    <location>
        <begin position="39"/>
        <end position="71"/>
    </location>
</feature>
<feature type="binding site" evidence="1">
    <location>
        <position position="14"/>
    </location>
    <ligand>
        <name>Ca(2+)</name>
        <dbReference type="ChEBI" id="CHEBI:29108"/>
        <label>1</label>
    </ligand>
</feature>
<feature type="binding site" evidence="1">
    <location>
        <position position="16"/>
    </location>
    <ligand>
        <name>Ca(2+)</name>
        <dbReference type="ChEBI" id="CHEBI:29108"/>
        <label>1</label>
    </ligand>
</feature>
<feature type="binding site" evidence="1">
    <location>
        <position position="18"/>
    </location>
    <ligand>
        <name>Ca(2+)</name>
        <dbReference type="ChEBI" id="CHEBI:29108"/>
        <label>1</label>
    </ligand>
</feature>
<feature type="binding site" evidence="1">
    <location>
        <position position="20"/>
    </location>
    <ligand>
        <name>Ca(2+)</name>
        <dbReference type="ChEBI" id="CHEBI:29108"/>
        <label>1</label>
    </ligand>
</feature>
<feature type="binding site" evidence="1">
    <location>
        <position position="25"/>
    </location>
    <ligand>
        <name>Ca(2+)</name>
        <dbReference type="ChEBI" id="CHEBI:29108"/>
        <label>1</label>
    </ligand>
</feature>
<feature type="binding site" evidence="1">
    <location>
        <position position="49"/>
    </location>
    <ligand>
        <name>Ca(2+)</name>
        <dbReference type="ChEBI" id="CHEBI:29108"/>
        <label>2</label>
    </ligand>
</feature>
<feature type="binding site" evidence="1">
    <location>
        <position position="51"/>
    </location>
    <ligand>
        <name>Ca(2+)</name>
        <dbReference type="ChEBI" id="CHEBI:29108"/>
        <label>2</label>
    </ligand>
</feature>
<feature type="binding site" evidence="1">
    <location>
        <position position="53"/>
    </location>
    <ligand>
        <name>Ca(2+)</name>
        <dbReference type="ChEBI" id="CHEBI:29108"/>
        <label>2</label>
    </ligand>
</feature>
<feature type="binding site" evidence="1">
    <location>
        <position position="55"/>
    </location>
    <ligand>
        <name>Ca(2+)</name>
        <dbReference type="ChEBI" id="CHEBI:29108"/>
        <label>2</label>
    </ligand>
</feature>
<feature type="binding site" evidence="1">
    <location>
        <position position="60"/>
    </location>
    <ligand>
        <name>Ca(2+)</name>
        <dbReference type="ChEBI" id="CHEBI:29108"/>
        <label>2</label>
    </ligand>
</feature>
<accession>P69197</accession>
<accession>Q42470</accession>
<evidence type="ECO:0000255" key="1">
    <source>
        <dbReference type="PROSITE-ProRule" id="PRU00448"/>
    </source>
</evidence>
<protein>
    <recommendedName>
        <fullName>Polcalcin Bra r 1</fullName>
    </recommendedName>
    <alternativeName>
        <fullName>Calcium-binding pollen allergen Bra r 1</fullName>
    </alternativeName>
    <allergenName>Bra r 1</allergenName>
</protein>
<sequence>MADAEHERIFKKFDTDGDGKISAAELEEALKKLGSVTPDDVTRMMAKIDTDGDGNISFQEFTEFASANPGLMKDVAKVF</sequence>
<keyword id="KW-0020">Allergen</keyword>
<keyword id="KW-0106">Calcium</keyword>
<keyword id="KW-0479">Metal-binding</keyword>
<keyword id="KW-1185">Reference proteome</keyword>
<keyword id="KW-0677">Repeat</keyword>
<comment type="allergen">
    <text>Causes an allergic reaction in human. Binds to IgE.</text>
</comment>
<name>POLC1_BRACM</name>
<proteinExistence type="evidence at protein level"/>
<reference key="1">
    <citation type="journal article" date="1995" name="Plant Mol. Biol.">
        <title>A cDNA clone encoding an IgE-binding protein from Brassica anther has significant sequence similarity to Ca(2+)-binding proteins.</title>
        <authorList>
            <person name="Toriyama K."/>
            <person name="Okada T."/>
            <person name="Watanabe M."/>
            <person name="Ide T."/>
            <person name="Ashida T."/>
            <person name="Xu H."/>
            <person name="Singh M."/>
        </authorList>
    </citation>
    <scope>NUCLEOTIDE SEQUENCE [MRNA]</scope>
    <source>
        <strain>cv. S9</strain>
        <tissue>Pollen</tissue>
    </source>
</reference>
<reference key="2">
    <citation type="journal article" date="2000" name="Plant Cell Physiol.">
        <title>Expression of Bra r 1 gene in transgenic tobacco and Bra r 1 promoter activity in pollen of various plant species.</title>
        <authorList>
            <person name="Okada T."/>
            <person name="Sasaki Y."/>
            <person name="Ohta R."/>
            <person name="Onozuka N."/>
            <person name="Toriyama K."/>
        </authorList>
    </citation>
    <scope>NUCLEOTIDE SEQUENCE [GENOMIC DNA]</scope>
</reference>